<organism>
    <name type="scientific">Bos taurus</name>
    <name type="common">Bovine</name>
    <dbReference type="NCBI Taxonomy" id="9913"/>
    <lineage>
        <taxon>Eukaryota</taxon>
        <taxon>Metazoa</taxon>
        <taxon>Chordata</taxon>
        <taxon>Craniata</taxon>
        <taxon>Vertebrata</taxon>
        <taxon>Euteleostomi</taxon>
        <taxon>Mammalia</taxon>
        <taxon>Eutheria</taxon>
        <taxon>Laurasiatheria</taxon>
        <taxon>Artiodactyla</taxon>
        <taxon>Ruminantia</taxon>
        <taxon>Pecora</taxon>
        <taxon>Bovidae</taxon>
        <taxon>Bovinae</taxon>
        <taxon>Bos</taxon>
    </lineage>
</organism>
<proteinExistence type="evidence at transcript level"/>
<gene>
    <name type="primary">ERICH2</name>
</gene>
<feature type="chain" id="PRO_0000346761" description="Glutamate-rich protein 2">
    <location>
        <begin position="1"/>
        <end position="142"/>
    </location>
</feature>
<feature type="region of interest" description="Disordered" evidence="1">
    <location>
        <begin position="1"/>
        <end position="55"/>
    </location>
</feature>
<feature type="region of interest" description="Disordered" evidence="1">
    <location>
        <begin position="104"/>
        <end position="142"/>
    </location>
</feature>
<feature type="compositionally biased region" description="Basic and acidic residues" evidence="1">
    <location>
        <begin position="9"/>
        <end position="27"/>
    </location>
</feature>
<feature type="compositionally biased region" description="Acidic residues" evidence="1">
    <location>
        <begin position="28"/>
        <end position="43"/>
    </location>
</feature>
<feature type="compositionally biased region" description="Basic and acidic residues" evidence="1">
    <location>
        <begin position="44"/>
        <end position="53"/>
    </location>
</feature>
<feature type="compositionally biased region" description="Acidic residues" evidence="1">
    <location>
        <begin position="109"/>
        <end position="142"/>
    </location>
</feature>
<evidence type="ECO:0000256" key="1">
    <source>
        <dbReference type="SAM" id="MobiDB-lite"/>
    </source>
</evidence>
<keyword id="KW-1185">Reference proteome</keyword>
<name>ERIC2_BOVIN</name>
<accession>A6QQ66</accession>
<reference key="1">
    <citation type="submission" date="2007-07" db="EMBL/GenBank/DDBJ databases">
        <authorList>
            <consortium name="NIH - Mammalian Gene Collection (MGC) project"/>
        </authorList>
    </citation>
    <scope>NUCLEOTIDE SEQUENCE [LARGE SCALE MRNA]</scope>
    <source>
        <strain>Crossbred X Angus</strain>
        <tissue>Liver</tissue>
    </source>
</reference>
<dbReference type="EMBL" id="BC149673">
    <property type="protein sequence ID" value="AAI49674.1"/>
    <property type="molecule type" value="mRNA"/>
</dbReference>
<dbReference type="RefSeq" id="NP_001095756.1">
    <property type="nucleotide sequence ID" value="NM_001102286.3"/>
</dbReference>
<dbReference type="RefSeq" id="XP_005202418.1">
    <property type="nucleotide sequence ID" value="XM_005202361.2"/>
</dbReference>
<dbReference type="RefSeq" id="XP_005202420.1">
    <property type="nucleotide sequence ID" value="XM_005202363.2"/>
</dbReference>
<dbReference type="RefSeq" id="XP_024833670.1">
    <property type="nucleotide sequence ID" value="XM_024977902.2"/>
</dbReference>
<dbReference type="SMR" id="A6QQ66"/>
<dbReference type="STRING" id="9913.ENSBTAP00000067989"/>
<dbReference type="PaxDb" id="9913-ENSBTAP00000043915"/>
<dbReference type="GeneID" id="615113"/>
<dbReference type="KEGG" id="bta:615113"/>
<dbReference type="CTD" id="285141"/>
<dbReference type="VEuPathDB" id="HostDB:ENSBTAG00000051169"/>
<dbReference type="eggNOG" id="ENOG502S4MD">
    <property type="taxonomic scope" value="Eukaryota"/>
</dbReference>
<dbReference type="HOGENOM" id="CLU_083912_0_0_1"/>
<dbReference type="InParanoid" id="A6QQ66"/>
<dbReference type="OMA" id="DEESFCN"/>
<dbReference type="OrthoDB" id="9950633at2759"/>
<dbReference type="Proteomes" id="UP000009136">
    <property type="component" value="Chromosome 2"/>
</dbReference>
<dbReference type="Bgee" id="ENSBTAG00000051169">
    <property type="expression patterns" value="Expressed in semen and 69 other cell types or tissues"/>
</dbReference>
<dbReference type="InterPro" id="IPR026703">
    <property type="entry name" value="ERICH2"/>
</dbReference>
<dbReference type="PANTHER" id="PTHR21520">
    <property type="entry name" value="GLUTAMATE-RICH PROTEIN 2"/>
    <property type="match status" value="1"/>
</dbReference>
<dbReference type="PANTHER" id="PTHR21520:SF2">
    <property type="entry name" value="GLUTAMATE-RICH PROTEIN 2"/>
    <property type="match status" value="1"/>
</dbReference>
<sequence>MSKNVVIAEQEKNNEHCPEDINDKLSESTDDDGEDTSDEDKEEDSNPNKDTHAPLELMTEFLRAEMGHDYHLAKKLCQMILIYEPENPEAKEFFSLIEEMLLMEKAQNLEEDDDESEEDNSESEGESTEDPSEESSDECEDG</sequence>
<protein>
    <recommendedName>
        <fullName>Glutamate-rich protein 2</fullName>
    </recommendedName>
</protein>